<evidence type="ECO:0000255" key="1">
    <source>
        <dbReference type="HAMAP-Rule" id="MF_01381"/>
    </source>
</evidence>
<organism>
    <name type="scientific">Escherichia coli O8 (strain IAI1)</name>
    <dbReference type="NCBI Taxonomy" id="585034"/>
    <lineage>
        <taxon>Bacteria</taxon>
        <taxon>Pseudomonadati</taxon>
        <taxon>Pseudomonadota</taxon>
        <taxon>Gammaproteobacteria</taxon>
        <taxon>Enterobacterales</taxon>
        <taxon>Enterobacteriaceae</taxon>
        <taxon>Escherichia</taxon>
    </lineage>
</organism>
<name>EMTA_ECO8A</name>
<proteinExistence type="inferred from homology"/>
<accession>B7LXA7</accession>
<keyword id="KW-0998">Cell outer membrane</keyword>
<keyword id="KW-0961">Cell wall biogenesis/degradation</keyword>
<keyword id="KW-0449">Lipoprotein</keyword>
<keyword id="KW-0456">Lyase</keyword>
<keyword id="KW-0472">Membrane</keyword>
<keyword id="KW-0564">Palmitate</keyword>
<keyword id="KW-0732">Signal</keyword>
<feature type="signal peptide" evidence="1">
    <location>
        <begin position="1"/>
        <end position="15"/>
    </location>
</feature>
<feature type="chain" id="PRO_1000144952" description="Endo-type membrane-bound lytic murein transglycosylase A">
    <location>
        <begin position="16"/>
        <end position="203"/>
    </location>
</feature>
<feature type="lipid moiety-binding region" description="N-palmitoyl cysteine" evidence="1">
    <location>
        <position position="16"/>
    </location>
</feature>
<feature type="lipid moiety-binding region" description="S-diacylglycerol cysteine" evidence="1">
    <location>
        <position position="16"/>
    </location>
</feature>
<dbReference type="EC" id="4.2.2.n2" evidence="1"/>
<dbReference type="EMBL" id="CU928160">
    <property type="protein sequence ID" value="CAQ98072.1"/>
    <property type="molecule type" value="Genomic_DNA"/>
</dbReference>
<dbReference type="RefSeq" id="WP_001295616.1">
    <property type="nucleotide sequence ID" value="NC_011741.1"/>
</dbReference>
<dbReference type="SMR" id="B7LXA7"/>
<dbReference type="CAZy" id="GH23">
    <property type="family name" value="Glycoside Hydrolase Family 23"/>
</dbReference>
<dbReference type="GeneID" id="75171299"/>
<dbReference type="KEGG" id="ecr:ECIAI1_1211"/>
<dbReference type="HOGENOM" id="CLU_103257_0_0_6"/>
<dbReference type="GO" id="GO:0009279">
    <property type="term" value="C:cell outer membrane"/>
    <property type="evidence" value="ECO:0007669"/>
    <property type="project" value="UniProtKB-SubCell"/>
</dbReference>
<dbReference type="GO" id="GO:0008932">
    <property type="term" value="F:lytic endotransglycosylase activity"/>
    <property type="evidence" value="ECO:0007669"/>
    <property type="project" value="InterPro"/>
</dbReference>
<dbReference type="GO" id="GO:0016998">
    <property type="term" value="P:cell wall macromolecule catabolic process"/>
    <property type="evidence" value="ECO:0007669"/>
    <property type="project" value="UniProtKB-UniRule"/>
</dbReference>
<dbReference type="GO" id="GO:0071555">
    <property type="term" value="P:cell wall organization"/>
    <property type="evidence" value="ECO:0007669"/>
    <property type="project" value="UniProtKB-KW"/>
</dbReference>
<dbReference type="GO" id="GO:0000270">
    <property type="term" value="P:peptidoglycan metabolic process"/>
    <property type="evidence" value="ECO:0007669"/>
    <property type="project" value="InterPro"/>
</dbReference>
<dbReference type="CDD" id="cd16893">
    <property type="entry name" value="LT_MltC_MltE"/>
    <property type="match status" value="1"/>
</dbReference>
<dbReference type="FunFam" id="1.10.530.10:FF:000007">
    <property type="entry name" value="Endo-type membrane-bound lytic murein transglycosylase A"/>
    <property type="match status" value="1"/>
</dbReference>
<dbReference type="Gene3D" id="1.10.530.10">
    <property type="match status" value="1"/>
</dbReference>
<dbReference type="HAMAP" id="MF_01381">
    <property type="entry name" value="EmtA"/>
    <property type="match status" value="1"/>
</dbReference>
<dbReference type="InterPro" id="IPR023946">
    <property type="entry name" value="EmtA"/>
</dbReference>
<dbReference type="InterPro" id="IPR023346">
    <property type="entry name" value="Lysozyme-like_dom_sf"/>
</dbReference>
<dbReference type="InterPro" id="IPR000189">
    <property type="entry name" value="Transglyc_AS"/>
</dbReference>
<dbReference type="InterPro" id="IPR008258">
    <property type="entry name" value="Transglycosylase_SLT_dom_1"/>
</dbReference>
<dbReference type="NCBIfam" id="NF012014">
    <property type="entry name" value="PRK15470.1"/>
    <property type="match status" value="1"/>
</dbReference>
<dbReference type="PANTHER" id="PTHR37423:SF4">
    <property type="entry name" value="ENDO-TYPE MEMBRANE-BOUND LYTIC MUREIN TRANSGLYCOSYLASE A"/>
    <property type="match status" value="1"/>
</dbReference>
<dbReference type="PANTHER" id="PTHR37423">
    <property type="entry name" value="SOLUBLE LYTIC MUREIN TRANSGLYCOSYLASE-RELATED"/>
    <property type="match status" value="1"/>
</dbReference>
<dbReference type="Pfam" id="PF01464">
    <property type="entry name" value="SLT"/>
    <property type="match status" value="1"/>
</dbReference>
<dbReference type="SUPFAM" id="SSF53955">
    <property type="entry name" value="Lysozyme-like"/>
    <property type="match status" value="1"/>
</dbReference>
<dbReference type="PROSITE" id="PS51257">
    <property type="entry name" value="PROKAR_LIPOPROTEIN"/>
    <property type="match status" value="1"/>
</dbReference>
<dbReference type="PROSITE" id="PS00922">
    <property type="entry name" value="TRANSGLYCOSYLASE"/>
    <property type="match status" value="1"/>
</dbReference>
<comment type="function">
    <text evidence="1">Murein-degrading enzyme. May play a role in recycling of muropeptides during cell elongation and/or cell division. Preferentially cleaves at a distance of more than two disaccharide units from the ends of the glycan chain.</text>
</comment>
<comment type="catalytic activity">
    <reaction evidence="1">
        <text>Endolytic cleavage of the (1-&gt;4)-beta-glycosidic linkage between N-acetylmuramic acid (MurNAc) and N-acetylglucosamine (GlcNAc) residues in peptidoglycan with concomitant formation of a 1,6-anhydrobond in the MurNAc residue.</text>
        <dbReference type="EC" id="4.2.2.n2"/>
    </reaction>
</comment>
<comment type="subcellular location">
    <subcellularLocation>
        <location evidence="1">Cell outer membrane</location>
        <topology evidence="1">Lipid-anchor</topology>
    </subcellularLocation>
</comment>
<comment type="similarity">
    <text evidence="1">Belongs to the transglycosylase Slt family.</text>
</comment>
<reference key="1">
    <citation type="journal article" date="2009" name="PLoS Genet.">
        <title>Organised genome dynamics in the Escherichia coli species results in highly diverse adaptive paths.</title>
        <authorList>
            <person name="Touchon M."/>
            <person name="Hoede C."/>
            <person name="Tenaillon O."/>
            <person name="Barbe V."/>
            <person name="Baeriswyl S."/>
            <person name="Bidet P."/>
            <person name="Bingen E."/>
            <person name="Bonacorsi S."/>
            <person name="Bouchier C."/>
            <person name="Bouvet O."/>
            <person name="Calteau A."/>
            <person name="Chiapello H."/>
            <person name="Clermont O."/>
            <person name="Cruveiller S."/>
            <person name="Danchin A."/>
            <person name="Diard M."/>
            <person name="Dossat C."/>
            <person name="Karoui M.E."/>
            <person name="Frapy E."/>
            <person name="Garry L."/>
            <person name="Ghigo J.M."/>
            <person name="Gilles A.M."/>
            <person name="Johnson J."/>
            <person name="Le Bouguenec C."/>
            <person name="Lescat M."/>
            <person name="Mangenot S."/>
            <person name="Martinez-Jehanne V."/>
            <person name="Matic I."/>
            <person name="Nassif X."/>
            <person name="Oztas S."/>
            <person name="Petit M.A."/>
            <person name="Pichon C."/>
            <person name="Rouy Z."/>
            <person name="Ruf C.S."/>
            <person name="Schneider D."/>
            <person name="Tourret J."/>
            <person name="Vacherie B."/>
            <person name="Vallenet D."/>
            <person name="Medigue C."/>
            <person name="Rocha E.P.C."/>
            <person name="Denamur E."/>
        </authorList>
    </citation>
    <scope>NUCLEOTIDE SEQUENCE [LARGE SCALE GENOMIC DNA]</scope>
    <source>
        <strain>IAI1</strain>
    </source>
</reference>
<protein>
    <recommendedName>
        <fullName evidence="1">Endo-type membrane-bound lytic murein transglycosylase A</fullName>
        <ecNumber evidence="1">4.2.2.n2</ecNumber>
    </recommendedName>
    <alternativeName>
        <fullName evidence="1">Peptidoglycan lytic endotransglycosylase</fullName>
    </alternativeName>
</protein>
<gene>
    <name evidence="1" type="primary">emtA</name>
    <name type="ordered locus">ECIAI1_1211</name>
</gene>
<sequence length="203" mass="22213">MKLRWFAFLIVLLAGCSSKHDYTNPPWNAKVPVQRAMQWMPISQKAGAAWGVDPQLITAIIAIESGGNPNAVSKSNAIGLMQLKASTSGRDVYRRMGWSGEPTTSELKNPERNISMGAAYLNILETGPLAGIEDPKVLQYALVVSYANGAGALLRTFSSDRKKAISKINDLDADEFLDHVARNHPAPQAPRYIYKLEQALDAM</sequence>